<accession>A0KIN6</accession>
<protein>
    <recommendedName>
        <fullName evidence="2">GTP cyclohydrolase 1</fullName>
        <ecNumber evidence="2">3.5.4.16</ecNumber>
    </recommendedName>
    <alternativeName>
        <fullName evidence="2">GTP cyclohydrolase I</fullName>
        <shortName evidence="2">GTP-CH-I</shortName>
    </alternativeName>
</protein>
<evidence type="ECO:0000250" key="1"/>
<evidence type="ECO:0000255" key="2">
    <source>
        <dbReference type="HAMAP-Rule" id="MF_00223"/>
    </source>
</evidence>
<feature type="chain" id="PRO_1000043654" description="GTP cyclohydrolase 1">
    <location>
        <begin position="1"/>
        <end position="218"/>
    </location>
</feature>
<feature type="binding site" evidence="2">
    <location>
        <position position="109"/>
    </location>
    <ligand>
        <name>Zn(2+)</name>
        <dbReference type="ChEBI" id="CHEBI:29105"/>
    </ligand>
</feature>
<feature type="binding site" evidence="2">
    <location>
        <position position="112"/>
    </location>
    <ligand>
        <name>Zn(2+)</name>
        <dbReference type="ChEBI" id="CHEBI:29105"/>
    </ligand>
</feature>
<feature type="binding site" evidence="2">
    <location>
        <position position="180"/>
    </location>
    <ligand>
        <name>Zn(2+)</name>
        <dbReference type="ChEBI" id="CHEBI:29105"/>
    </ligand>
</feature>
<reference key="1">
    <citation type="journal article" date="2006" name="J. Bacteriol.">
        <title>Genome sequence of Aeromonas hydrophila ATCC 7966T: jack of all trades.</title>
        <authorList>
            <person name="Seshadri R."/>
            <person name="Joseph S.W."/>
            <person name="Chopra A.K."/>
            <person name="Sha J."/>
            <person name="Shaw J."/>
            <person name="Graf J."/>
            <person name="Haft D.H."/>
            <person name="Wu M."/>
            <person name="Ren Q."/>
            <person name="Rosovitz M.J."/>
            <person name="Madupu R."/>
            <person name="Tallon L."/>
            <person name="Kim M."/>
            <person name="Jin S."/>
            <person name="Vuong H."/>
            <person name="Stine O.C."/>
            <person name="Ali A."/>
            <person name="Horneman A.J."/>
            <person name="Heidelberg J.F."/>
        </authorList>
    </citation>
    <scope>NUCLEOTIDE SEQUENCE [LARGE SCALE GENOMIC DNA]</scope>
    <source>
        <strain>ATCC 7966 / DSM 30187 / BCRC 13018 / CCUG 14551 / JCM 1027 / KCTC 2358 / NCIMB 9240 / NCTC 8049</strain>
    </source>
</reference>
<keyword id="KW-0342">GTP-binding</keyword>
<keyword id="KW-0378">Hydrolase</keyword>
<keyword id="KW-0479">Metal-binding</keyword>
<keyword id="KW-0547">Nucleotide-binding</keyword>
<keyword id="KW-0554">One-carbon metabolism</keyword>
<keyword id="KW-1185">Reference proteome</keyword>
<keyword id="KW-0862">Zinc</keyword>
<name>GCH1_AERHH</name>
<comment type="catalytic activity">
    <reaction evidence="2">
        <text>GTP + H2O = 7,8-dihydroneopterin 3'-triphosphate + formate + H(+)</text>
        <dbReference type="Rhea" id="RHEA:17473"/>
        <dbReference type="ChEBI" id="CHEBI:15377"/>
        <dbReference type="ChEBI" id="CHEBI:15378"/>
        <dbReference type="ChEBI" id="CHEBI:15740"/>
        <dbReference type="ChEBI" id="CHEBI:37565"/>
        <dbReference type="ChEBI" id="CHEBI:58462"/>
        <dbReference type="EC" id="3.5.4.16"/>
    </reaction>
</comment>
<comment type="pathway">
    <text evidence="2">Cofactor biosynthesis; 7,8-dihydroneopterin triphosphate biosynthesis; 7,8-dihydroneopterin triphosphate from GTP: step 1/1.</text>
</comment>
<comment type="subunit">
    <text evidence="1">Toroid-shaped homodecamer, composed of two pentamers of five dimers.</text>
</comment>
<comment type="similarity">
    <text evidence="2">Belongs to the GTP cyclohydrolase I family.</text>
</comment>
<gene>
    <name evidence="2" type="primary">folE</name>
    <name type="ordered locus">AHA_1601</name>
</gene>
<proteinExistence type="inferred from homology"/>
<sequence>MTSLSREALLVRAALEAEGLETPLVANALDGQQKREKIEGHMRAIMETLGLDLADDSLAETPHRIAKMYVNEIFSGLDYATFPKVTVIENKMKVDEMIMVRDISLTSTCEHHFVTIDGLAHVAYIPRGKVIGLSKINRIVQFFARRPQVQERLTQQILLALQTLLGTKDVAISIKATHFCVKARGVMDSTSYTTTTSLGGVFKTQPDTRAEFLAGLKR</sequence>
<dbReference type="EC" id="3.5.4.16" evidence="2"/>
<dbReference type="EMBL" id="CP000462">
    <property type="protein sequence ID" value="ABK38824.1"/>
    <property type="molecule type" value="Genomic_DNA"/>
</dbReference>
<dbReference type="RefSeq" id="WP_011705496.1">
    <property type="nucleotide sequence ID" value="NC_008570.1"/>
</dbReference>
<dbReference type="RefSeq" id="YP_856137.1">
    <property type="nucleotide sequence ID" value="NC_008570.1"/>
</dbReference>
<dbReference type="SMR" id="A0KIN6"/>
<dbReference type="STRING" id="380703.AHA_1601"/>
<dbReference type="EnsemblBacteria" id="ABK38824">
    <property type="protein sequence ID" value="ABK38824"/>
    <property type="gene ID" value="AHA_1601"/>
</dbReference>
<dbReference type="GeneID" id="4488353"/>
<dbReference type="KEGG" id="aha:AHA_1601"/>
<dbReference type="PATRIC" id="fig|380703.7.peg.1613"/>
<dbReference type="eggNOG" id="COG0302">
    <property type="taxonomic scope" value="Bacteria"/>
</dbReference>
<dbReference type="HOGENOM" id="CLU_049768_3_2_6"/>
<dbReference type="OrthoDB" id="9801207at2"/>
<dbReference type="UniPathway" id="UPA00848">
    <property type="reaction ID" value="UER00151"/>
</dbReference>
<dbReference type="Proteomes" id="UP000000756">
    <property type="component" value="Chromosome"/>
</dbReference>
<dbReference type="GO" id="GO:0005737">
    <property type="term" value="C:cytoplasm"/>
    <property type="evidence" value="ECO:0007669"/>
    <property type="project" value="TreeGrafter"/>
</dbReference>
<dbReference type="GO" id="GO:0005525">
    <property type="term" value="F:GTP binding"/>
    <property type="evidence" value="ECO:0007669"/>
    <property type="project" value="UniProtKB-KW"/>
</dbReference>
<dbReference type="GO" id="GO:0003934">
    <property type="term" value="F:GTP cyclohydrolase I activity"/>
    <property type="evidence" value="ECO:0007669"/>
    <property type="project" value="UniProtKB-UniRule"/>
</dbReference>
<dbReference type="GO" id="GO:0008270">
    <property type="term" value="F:zinc ion binding"/>
    <property type="evidence" value="ECO:0007669"/>
    <property type="project" value="UniProtKB-UniRule"/>
</dbReference>
<dbReference type="GO" id="GO:0006730">
    <property type="term" value="P:one-carbon metabolic process"/>
    <property type="evidence" value="ECO:0007669"/>
    <property type="project" value="UniProtKB-UniRule"/>
</dbReference>
<dbReference type="GO" id="GO:0006729">
    <property type="term" value="P:tetrahydrobiopterin biosynthetic process"/>
    <property type="evidence" value="ECO:0007669"/>
    <property type="project" value="TreeGrafter"/>
</dbReference>
<dbReference type="GO" id="GO:0046654">
    <property type="term" value="P:tetrahydrofolate biosynthetic process"/>
    <property type="evidence" value="ECO:0007669"/>
    <property type="project" value="UniProtKB-UniRule"/>
</dbReference>
<dbReference type="FunFam" id="3.30.1130.10:FF:000001">
    <property type="entry name" value="GTP cyclohydrolase 1"/>
    <property type="match status" value="1"/>
</dbReference>
<dbReference type="Gene3D" id="1.10.286.10">
    <property type="match status" value="1"/>
</dbReference>
<dbReference type="Gene3D" id="3.30.1130.10">
    <property type="match status" value="1"/>
</dbReference>
<dbReference type="HAMAP" id="MF_00223">
    <property type="entry name" value="FolE"/>
    <property type="match status" value="1"/>
</dbReference>
<dbReference type="InterPro" id="IPR043133">
    <property type="entry name" value="GTP-CH-I_C/QueF"/>
</dbReference>
<dbReference type="InterPro" id="IPR043134">
    <property type="entry name" value="GTP-CH-I_N"/>
</dbReference>
<dbReference type="InterPro" id="IPR001474">
    <property type="entry name" value="GTP_CycHdrlase_I"/>
</dbReference>
<dbReference type="InterPro" id="IPR018234">
    <property type="entry name" value="GTP_CycHdrlase_I_CS"/>
</dbReference>
<dbReference type="InterPro" id="IPR020602">
    <property type="entry name" value="GTP_CycHdrlase_I_dom"/>
</dbReference>
<dbReference type="NCBIfam" id="TIGR00063">
    <property type="entry name" value="folE"/>
    <property type="match status" value="1"/>
</dbReference>
<dbReference type="NCBIfam" id="NF006824">
    <property type="entry name" value="PRK09347.1-1"/>
    <property type="match status" value="1"/>
</dbReference>
<dbReference type="NCBIfam" id="NF006825">
    <property type="entry name" value="PRK09347.1-2"/>
    <property type="match status" value="1"/>
</dbReference>
<dbReference type="NCBIfam" id="NF006826">
    <property type="entry name" value="PRK09347.1-3"/>
    <property type="match status" value="1"/>
</dbReference>
<dbReference type="PANTHER" id="PTHR11109:SF7">
    <property type="entry name" value="GTP CYCLOHYDROLASE 1"/>
    <property type="match status" value="1"/>
</dbReference>
<dbReference type="PANTHER" id="PTHR11109">
    <property type="entry name" value="GTP CYCLOHYDROLASE I"/>
    <property type="match status" value="1"/>
</dbReference>
<dbReference type="Pfam" id="PF01227">
    <property type="entry name" value="GTP_cyclohydroI"/>
    <property type="match status" value="1"/>
</dbReference>
<dbReference type="SUPFAM" id="SSF55620">
    <property type="entry name" value="Tetrahydrobiopterin biosynthesis enzymes-like"/>
    <property type="match status" value="1"/>
</dbReference>
<dbReference type="PROSITE" id="PS00859">
    <property type="entry name" value="GTP_CYCLOHYDROL_1_1"/>
    <property type="match status" value="1"/>
</dbReference>
<dbReference type="PROSITE" id="PS00860">
    <property type="entry name" value="GTP_CYCLOHYDROL_1_2"/>
    <property type="match status" value="1"/>
</dbReference>
<organism>
    <name type="scientific">Aeromonas hydrophila subsp. hydrophila (strain ATCC 7966 / DSM 30187 / BCRC 13018 / CCUG 14551 / JCM 1027 / KCTC 2358 / NCIMB 9240 / NCTC 8049)</name>
    <dbReference type="NCBI Taxonomy" id="380703"/>
    <lineage>
        <taxon>Bacteria</taxon>
        <taxon>Pseudomonadati</taxon>
        <taxon>Pseudomonadota</taxon>
        <taxon>Gammaproteobacteria</taxon>
        <taxon>Aeromonadales</taxon>
        <taxon>Aeromonadaceae</taxon>
        <taxon>Aeromonas</taxon>
    </lineage>
</organism>